<reference key="1">
    <citation type="submission" date="2007-06" db="EMBL/GenBank/DDBJ databases">
        <authorList>
            <person name="Dodson R.J."/>
            <person name="Harkins D."/>
            <person name="Paulsen I.T."/>
        </authorList>
    </citation>
    <scope>NUCLEOTIDE SEQUENCE [LARGE SCALE GENOMIC DNA]</scope>
    <source>
        <strain>DSM 24068 / PA7</strain>
    </source>
</reference>
<name>RNFE_PSEP7</name>
<protein>
    <recommendedName>
        <fullName evidence="1">Ion-translocating oxidoreductase complex subunit E</fullName>
        <ecNumber evidence="1">7.-.-.-</ecNumber>
    </recommendedName>
    <alternativeName>
        <fullName evidence="1">Rnf electron transport complex subunit E</fullName>
    </alternativeName>
</protein>
<dbReference type="EC" id="7.-.-.-" evidence="1"/>
<dbReference type="EMBL" id="CP000744">
    <property type="protein sequence ID" value="ABR82813.1"/>
    <property type="molecule type" value="Genomic_DNA"/>
</dbReference>
<dbReference type="RefSeq" id="WP_012074793.1">
    <property type="nucleotide sequence ID" value="NC_009656.1"/>
</dbReference>
<dbReference type="SMR" id="A6V1T4"/>
<dbReference type="KEGG" id="pap:PSPA7_1635"/>
<dbReference type="HOGENOM" id="CLU_046659_1_0_6"/>
<dbReference type="Proteomes" id="UP000001582">
    <property type="component" value="Chromosome"/>
</dbReference>
<dbReference type="GO" id="GO:0005886">
    <property type="term" value="C:plasma membrane"/>
    <property type="evidence" value="ECO:0007669"/>
    <property type="project" value="UniProtKB-SubCell"/>
</dbReference>
<dbReference type="GO" id="GO:0022900">
    <property type="term" value="P:electron transport chain"/>
    <property type="evidence" value="ECO:0007669"/>
    <property type="project" value="UniProtKB-UniRule"/>
</dbReference>
<dbReference type="HAMAP" id="MF_00478">
    <property type="entry name" value="RsxE_RnfE"/>
    <property type="match status" value="1"/>
</dbReference>
<dbReference type="InterPro" id="IPR003667">
    <property type="entry name" value="NqrDE/RnfAE"/>
</dbReference>
<dbReference type="InterPro" id="IPR010968">
    <property type="entry name" value="RnfE"/>
</dbReference>
<dbReference type="NCBIfam" id="NF009070">
    <property type="entry name" value="PRK12405.1"/>
    <property type="match status" value="1"/>
</dbReference>
<dbReference type="NCBIfam" id="TIGR01948">
    <property type="entry name" value="rnfE"/>
    <property type="match status" value="1"/>
</dbReference>
<dbReference type="PANTHER" id="PTHR30586">
    <property type="entry name" value="ELECTRON TRANSPORT COMPLEX PROTEIN RNFE"/>
    <property type="match status" value="1"/>
</dbReference>
<dbReference type="PANTHER" id="PTHR30586:SF0">
    <property type="entry name" value="ION-TRANSLOCATING OXIDOREDUCTASE COMPLEX SUBUNIT E"/>
    <property type="match status" value="1"/>
</dbReference>
<dbReference type="Pfam" id="PF02508">
    <property type="entry name" value="Rnf-Nqr"/>
    <property type="match status" value="1"/>
</dbReference>
<dbReference type="PIRSF" id="PIRSF006102">
    <property type="entry name" value="NQR_DE"/>
    <property type="match status" value="1"/>
</dbReference>
<accession>A6V1T4</accession>
<gene>
    <name evidence="1" type="primary">rnfE</name>
    <name type="ordered locus">PSPA7_1635</name>
</gene>
<evidence type="ECO:0000255" key="1">
    <source>
        <dbReference type="HAMAP-Rule" id="MF_00478"/>
    </source>
</evidence>
<organism>
    <name type="scientific">Pseudomonas paraeruginosa (strain DSM 24068 / PA7)</name>
    <name type="common">Pseudomonas aeruginosa (strain PA7)</name>
    <dbReference type="NCBI Taxonomy" id="381754"/>
    <lineage>
        <taxon>Bacteria</taxon>
        <taxon>Pseudomonadati</taxon>
        <taxon>Pseudomonadota</taxon>
        <taxon>Gammaproteobacteria</taxon>
        <taxon>Pseudomonadales</taxon>
        <taxon>Pseudomonadaceae</taxon>
        <taxon>Pseudomonas</taxon>
        <taxon>Pseudomonas paraeruginosa</taxon>
    </lineage>
</organism>
<feature type="chain" id="PRO_1000060409" description="Ion-translocating oxidoreductase complex subunit E">
    <location>
        <begin position="1"/>
        <end position="239"/>
    </location>
</feature>
<feature type="transmembrane region" description="Helical" evidence="1">
    <location>
        <begin position="41"/>
        <end position="61"/>
    </location>
</feature>
<feature type="transmembrane region" description="Helical" evidence="1">
    <location>
        <begin position="71"/>
        <end position="91"/>
    </location>
</feature>
<feature type="transmembrane region" description="Helical" evidence="1">
    <location>
        <begin position="95"/>
        <end position="115"/>
    </location>
</feature>
<feature type="transmembrane region" description="Helical" evidence="1">
    <location>
        <begin position="130"/>
        <end position="150"/>
    </location>
</feature>
<feature type="transmembrane region" description="Helical" evidence="1">
    <location>
        <begin position="184"/>
        <end position="204"/>
    </location>
</feature>
<sequence length="239" mass="25528">MSEQGLREIARDGLWRNNPGLVQLLGLCPLLGTSNSTVNALGLGLATLLVLVCSNAAVSLVRGAVSEAIRLPAFVMIIAALTTCIELLMQAWTYELYQILGIFIPLITTNCVILGRAEAFAAKNGVLRASFDGLLTGLGFALVLLVLGGLRELLGQGTLLADMQLLFGPAAETWKIQIFPHYQGFLLAILPPGAFIMLGLLIALKNRIDESLAERARAQAGDVPASPQRQRVRVTGVIE</sequence>
<keyword id="KW-0997">Cell inner membrane</keyword>
<keyword id="KW-1003">Cell membrane</keyword>
<keyword id="KW-0249">Electron transport</keyword>
<keyword id="KW-0472">Membrane</keyword>
<keyword id="KW-1278">Translocase</keyword>
<keyword id="KW-0812">Transmembrane</keyword>
<keyword id="KW-1133">Transmembrane helix</keyword>
<keyword id="KW-0813">Transport</keyword>
<proteinExistence type="inferred from homology"/>
<comment type="function">
    <text evidence="1">Part of a membrane-bound complex that couples electron transfer with translocation of ions across the membrane.</text>
</comment>
<comment type="subunit">
    <text evidence="1">The complex is composed of six subunits: RnfA, RnfB, RnfC, RnfD, RnfE and RnfG.</text>
</comment>
<comment type="subcellular location">
    <subcellularLocation>
        <location evidence="1">Cell inner membrane</location>
        <topology evidence="1">Multi-pass membrane protein</topology>
    </subcellularLocation>
</comment>
<comment type="similarity">
    <text evidence="1">Belongs to the NqrDE/RnfAE family.</text>
</comment>